<feature type="chain" id="PRO_1000003283" description="Ribosome-recycling factor">
    <location>
        <begin position="1"/>
        <end position="185"/>
    </location>
</feature>
<organism>
    <name type="scientific">Streptococcus pyogenes serotype M12 (strain MGAS2096)</name>
    <dbReference type="NCBI Taxonomy" id="370553"/>
    <lineage>
        <taxon>Bacteria</taxon>
        <taxon>Bacillati</taxon>
        <taxon>Bacillota</taxon>
        <taxon>Bacilli</taxon>
        <taxon>Lactobacillales</taxon>
        <taxon>Streptococcaceae</taxon>
        <taxon>Streptococcus</taxon>
    </lineage>
</organism>
<accession>Q1JD58</accession>
<gene>
    <name evidence="1" type="primary">frr</name>
    <name type="ordered locus">MGAS2096_Spy0398</name>
</gene>
<dbReference type="EMBL" id="CP000261">
    <property type="protein sequence ID" value="ABF35450.1"/>
    <property type="molecule type" value="Genomic_DNA"/>
</dbReference>
<dbReference type="SMR" id="Q1JD58"/>
<dbReference type="KEGG" id="spj:MGAS2096_Spy0398"/>
<dbReference type="HOGENOM" id="CLU_073981_2_0_9"/>
<dbReference type="GO" id="GO:0005737">
    <property type="term" value="C:cytoplasm"/>
    <property type="evidence" value="ECO:0007669"/>
    <property type="project" value="UniProtKB-SubCell"/>
</dbReference>
<dbReference type="GO" id="GO:0043023">
    <property type="term" value="F:ribosomal large subunit binding"/>
    <property type="evidence" value="ECO:0007669"/>
    <property type="project" value="TreeGrafter"/>
</dbReference>
<dbReference type="GO" id="GO:0006415">
    <property type="term" value="P:translational termination"/>
    <property type="evidence" value="ECO:0007669"/>
    <property type="project" value="UniProtKB-UniRule"/>
</dbReference>
<dbReference type="CDD" id="cd00520">
    <property type="entry name" value="RRF"/>
    <property type="match status" value="1"/>
</dbReference>
<dbReference type="FunFam" id="1.10.132.20:FF:000001">
    <property type="entry name" value="Ribosome-recycling factor"/>
    <property type="match status" value="1"/>
</dbReference>
<dbReference type="FunFam" id="3.30.1360.40:FF:000001">
    <property type="entry name" value="Ribosome-recycling factor"/>
    <property type="match status" value="1"/>
</dbReference>
<dbReference type="Gene3D" id="3.30.1360.40">
    <property type="match status" value="1"/>
</dbReference>
<dbReference type="Gene3D" id="1.10.132.20">
    <property type="entry name" value="Ribosome-recycling factor"/>
    <property type="match status" value="1"/>
</dbReference>
<dbReference type="HAMAP" id="MF_00040">
    <property type="entry name" value="RRF"/>
    <property type="match status" value="1"/>
</dbReference>
<dbReference type="InterPro" id="IPR002661">
    <property type="entry name" value="Ribosome_recyc_fac"/>
</dbReference>
<dbReference type="InterPro" id="IPR023584">
    <property type="entry name" value="Ribosome_recyc_fac_dom"/>
</dbReference>
<dbReference type="InterPro" id="IPR036191">
    <property type="entry name" value="RRF_sf"/>
</dbReference>
<dbReference type="NCBIfam" id="TIGR00496">
    <property type="entry name" value="frr"/>
    <property type="match status" value="1"/>
</dbReference>
<dbReference type="PANTHER" id="PTHR20982:SF3">
    <property type="entry name" value="MITOCHONDRIAL RIBOSOME RECYCLING FACTOR PSEUDO 1"/>
    <property type="match status" value="1"/>
</dbReference>
<dbReference type="PANTHER" id="PTHR20982">
    <property type="entry name" value="RIBOSOME RECYCLING FACTOR"/>
    <property type="match status" value="1"/>
</dbReference>
<dbReference type="Pfam" id="PF01765">
    <property type="entry name" value="RRF"/>
    <property type="match status" value="1"/>
</dbReference>
<dbReference type="SUPFAM" id="SSF55194">
    <property type="entry name" value="Ribosome recycling factor, RRF"/>
    <property type="match status" value="1"/>
</dbReference>
<reference key="1">
    <citation type="journal article" date="2006" name="Proc. Natl. Acad. Sci. U.S.A.">
        <title>Molecular genetic anatomy of inter- and intraserotype variation in the human bacterial pathogen group A Streptococcus.</title>
        <authorList>
            <person name="Beres S.B."/>
            <person name="Richter E.W."/>
            <person name="Nagiec M.J."/>
            <person name="Sumby P."/>
            <person name="Porcella S.F."/>
            <person name="DeLeo F.R."/>
            <person name="Musser J.M."/>
        </authorList>
    </citation>
    <scope>NUCLEOTIDE SEQUENCE [LARGE SCALE GENOMIC DNA]</scope>
    <source>
        <strain>MGAS2096</strain>
    </source>
</reference>
<comment type="function">
    <text evidence="1">Responsible for the release of ribosomes from messenger RNA at the termination of protein biosynthesis. May increase the efficiency of translation by recycling ribosomes from one round of translation to another.</text>
</comment>
<comment type="subcellular location">
    <subcellularLocation>
        <location evidence="1">Cytoplasm</location>
    </subcellularLocation>
</comment>
<comment type="similarity">
    <text evidence="1">Belongs to the RRF family.</text>
</comment>
<proteinExistence type="inferred from homology"/>
<keyword id="KW-0963">Cytoplasm</keyword>
<keyword id="KW-0648">Protein biosynthesis</keyword>
<evidence type="ECO:0000255" key="1">
    <source>
        <dbReference type="HAMAP-Rule" id="MF_00040"/>
    </source>
</evidence>
<name>RRF_STRPB</name>
<protein>
    <recommendedName>
        <fullName evidence="1">Ribosome-recycling factor</fullName>
        <shortName evidence="1">RRF</shortName>
    </recommendedName>
    <alternativeName>
        <fullName evidence="1">Ribosome-releasing factor</fullName>
    </alternativeName>
</protein>
<sequence length="185" mass="20572">MANAIIETAKERFAQSHQSLSREYASIRAGRANASLLDRIQVDYYGAPTPLNQLASITVPEARVLLISPFDKSSIKDIERALNASDLGITPANDGSVIRLVIPALTEETRKELAKEVKKVGENAKIAIRNIRRDAMDDAKKQEKAKEITEDELKTLEKDIQKATDDAIKEIDRMTAEKEKELLSV</sequence>